<comment type="function">
    <text evidence="1">Fluoride-specific ion channel. Important for reducing fluoride concentration in the cell, thus reducing its toxicity.</text>
</comment>
<comment type="catalytic activity">
    <reaction evidence="1">
        <text>fluoride(in) = fluoride(out)</text>
        <dbReference type="Rhea" id="RHEA:76159"/>
        <dbReference type="ChEBI" id="CHEBI:17051"/>
    </reaction>
    <physiologicalReaction direction="left-to-right" evidence="1">
        <dbReference type="Rhea" id="RHEA:76160"/>
    </physiologicalReaction>
</comment>
<comment type="activity regulation">
    <text evidence="1">Na(+) is not transported, but it plays an essential structural role and its presence is essential for fluoride channel function.</text>
</comment>
<comment type="subcellular location">
    <subcellularLocation>
        <location evidence="1">Cell inner membrane</location>
        <topology evidence="1">Multi-pass membrane protein</topology>
    </subcellularLocation>
</comment>
<comment type="similarity">
    <text evidence="1">Belongs to the fluoride channel Fluc/FEX (TC 1.A.43) family.</text>
</comment>
<organism>
    <name type="scientific">Campylobacter jejuni subsp. jejuni serotype O:23/36 (strain 81-176)</name>
    <dbReference type="NCBI Taxonomy" id="354242"/>
    <lineage>
        <taxon>Bacteria</taxon>
        <taxon>Pseudomonadati</taxon>
        <taxon>Campylobacterota</taxon>
        <taxon>Epsilonproteobacteria</taxon>
        <taxon>Campylobacterales</taxon>
        <taxon>Campylobacteraceae</taxon>
        <taxon>Campylobacter</taxon>
    </lineage>
</organism>
<reference key="1">
    <citation type="submission" date="2006-12" db="EMBL/GenBank/DDBJ databases">
        <authorList>
            <person name="Fouts D.E."/>
            <person name="Nelson K.E."/>
            <person name="Sebastian Y."/>
        </authorList>
    </citation>
    <scope>NUCLEOTIDE SEQUENCE [LARGE SCALE GENOMIC DNA]</scope>
    <source>
        <strain>81-176</strain>
    </source>
</reference>
<gene>
    <name evidence="1" type="primary">fluC</name>
    <name evidence="1" type="synonym">crcB</name>
    <name type="ordered locus">CJJ81176_0545</name>
</gene>
<feature type="chain" id="PRO_1000026379" description="Fluoride-specific ion channel FluC">
    <location>
        <begin position="1"/>
        <end position="122"/>
    </location>
</feature>
<feature type="transmembrane region" description="Helical" evidence="1">
    <location>
        <begin position="6"/>
        <end position="26"/>
    </location>
</feature>
<feature type="transmembrane region" description="Helical" evidence="1">
    <location>
        <begin position="33"/>
        <end position="53"/>
    </location>
</feature>
<feature type="transmembrane region" description="Helical" evidence="1">
    <location>
        <begin position="60"/>
        <end position="80"/>
    </location>
</feature>
<feature type="transmembrane region" description="Helical" evidence="1">
    <location>
        <begin position="101"/>
        <end position="121"/>
    </location>
</feature>
<feature type="binding site" evidence="1">
    <location>
        <position position="75"/>
    </location>
    <ligand>
        <name>Na(+)</name>
        <dbReference type="ChEBI" id="CHEBI:29101"/>
        <note>structural</note>
    </ligand>
</feature>
<feature type="binding site" evidence="1">
    <location>
        <position position="78"/>
    </location>
    <ligand>
        <name>Na(+)</name>
        <dbReference type="ChEBI" id="CHEBI:29101"/>
        <note>structural</note>
    </ligand>
</feature>
<keyword id="KW-0997">Cell inner membrane</keyword>
<keyword id="KW-1003">Cell membrane</keyword>
<keyword id="KW-0407">Ion channel</keyword>
<keyword id="KW-0406">Ion transport</keyword>
<keyword id="KW-0472">Membrane</keyword>
<keyword id="KW-0479">Metal-binding</keyword>
<keyword id="KW-0915">Sodium</keyword>
<keyword id="KW-0812">Transmembrane</keyword>
<keyword id="KW-1133">Transmembrane helix</keyword>
<keyword id="KW-0813">Transport</keyword>
<proteinExistence type="inferred from homology"/>
<sequence length="122" mass="13514">MLNTLLVVGFGGFIGAILRMLSINLVNKFFPYSISFGTLFVNVLGSFIIGLLFSYAQNKGLSPLLKSFISTGFLGAFTTFSTFSYQNLLLLQSGNYLHFALNIILNVFLCLFAAWLGFLIFK</sequence>
<dbReference type="EMBL" id="CP000538">
    <property type="protein sequence ID" value="EAQ73135.1"/>
    <property type="molecule type" value="Genomic_DNA"/>
</dbReference>
<dbReference type="RefSeq" id="WP_002858490.1">
    <property type="nucleotide sequence ID" value="NC_008787.1"/>
</dbReference>
<dbReference type="SMR" id="A1VYM9"/>
<dbReference type="KEGG" id="cjj:CJJ81176_0545"/>
<dbReference type="eggNOG" id="COG0239">
    <property type="taxonomic scope" value="Bacteria"/>
</dbReference>
<dbReference type="HOGENOM" id="CLU_114342_3_0_7"/>
<dbReference type="Proteomes" id="UP000000646">
    <property type="component" value="Chromosome"/>
</dbReference>
<dbReference type="GO" id="GO:0005886">
    <property type="term" value="C:plasma membrane"/>
    <property type="evidence" value="ECO:0007669"/>
    <property type="project" value="UniProtKB-SubCell"/>
</dbReference>
<dbReference type="GO" id="GO:0062054">
    <property type="term" value="F:fluoride channel activity"/>
    <property type="evidence" value="ECO:0007669"/>
    <property type="project" value="UniProtKB-UniRule"/>
</dbReference>
<dbReference type="GO" id="GO:0046872">
    <property type="term" value="F:metal ion binding"/>
    <property type="evidence" value="ECO:0007669"/>
    <property type="project" value="UniProtKB-KW"/>
</dbReference>
<dbReference type="GO" id="GO:0140114">
    <property type="term" value="P:cellular detoxification of fluoride"/>
    <property type="evidence" value="ECO:0007669"/>
    <property type="project" value="UniProtKB-UniRule"/>
</dbReference>
<dbReference type="HAMAP" id="MF_00454">
    <property type="entry name" value="FluC"/>
    <property type="match status" value="1"/>
</dbReference>
<dbReference type="InterPro" id="IPR003691">
    <property type="entry name" value="FluC"/>
</dbReference>
<dbReference type="NCBIfam" id="TIGR00494">
    <property type="entry name" value="crcB"/>
    <property type="match status" value="1"/>
</dbReference>
<dbReference type="PANTHER" id="PTHR28259">
    <property type="entry name" value="FLUORIDE EXPORT PROTEIN 1-RELATED"/>
    <property type="match status" value="1"/>
</dbReference>
<dbReference type="PANTHER" id="PTHR28259:SF1">
    <property type="entry name" value="FLUORIDE EXPORT PROTEIN 1-RELATED"/>
    <property type="match status" value="1"/>
</dbReference>
<dbReference type="Pfam" id="PF02537">
    <property type="entry name" value="CRCB"/>
    <property type="match status" value="1"/>
</dbReference>
<name>FLUC_CAMJJ</name>
<evidence type="ECO:0000255" key="1">
    <source>
        <dbReference type="HAMAP-Rule" id="MF_00454"/>
    </source>
</evidence>
<protein>
    <recommendedName>
        <fullName evidence="1">Fluoride-specific ion channel FluC</fullName>
    </recommendedName>
</protein>
<accession>A1VYM9</accession>